<evidence type="ECO:0000250" key="1">
    <source>
        <dbReference type="UniProtKB" id="P48436"/>
    </source>
</evidence>
<evidence type="ECO:0000250" key="2">
    <source>
        <dbReference type="UniProtKB" id="Q04886"/>
    </source>
</evidence>
<evidence type="ECO:0000255" key="3">
    <source>
        <dbReference type="PROSITE-ProRule" id="PRU00267"/>
    </source>
</evidence>
<evidence type="ECO:0000256" key="4">
    <source>
        <dbReference type="SAM" id="MobiDB-lite"/>
    </source>
</evidence>
<evidence type="ECO:0000269" key="5">
    <source>
    </source>
</evidence>
<evidence type="ECO:0000303" key="6">
    <source>
    </source>
</evidence>
<evidence type="ECO:0000303" key="7">
    <source ref="1"/>
</evidence>
<evidence type="ECO:0000305" key="8"/>
<evidence type="ECO:0000312" key="9">
    <source>
        <dbReference type="HGNC" id="HGNC:11203"/>
    </source>
</evidence>
<name>SOX8_HUMAN</name>
<proteinExistence type="evidence at protein level"/>
<dbReference type="EMBL" id="AF226675">
    <property type="protein sequence ID" value="AAF35886.1"/>
    <property type="molecule type" value="mRNA"/>
</dbReference>
<dbReference type="EMBL" id="AE006465">
    <property type="protein sequence ID" value="AAK61260.1"/>
    <property type="molecule type" value="Genomic_DNA"/>
</dbReference>
<dbReference type="EMBL" id="Z99757">
    <property type="protein sequence ID" value="CAB75612.1"/>
    <property type="status" value="ALT_INIT"/>
    <property type="molecule type" value="Genomic_DNA"/>
</dbReference>
<dbReference type="EMBL" id="BC031797">
    <property type="protein sequence ID" value="AAH31797.1"/>
    <property type="molecule type" value="mRNA"/>
</dbReference>
<dbReference type="EMBL" id="AF164104">
    <property type="protein sequence ID" value="AAF37424.1"/>
    <property type="molecule type" value="mRNA"/>
</dbReference>
<dbReference type="CCDS" id="CCDS10428.1"/>
<dbReference type="RefSeq" id="NP_055402.2">
    <property type="nucleotide sequence ID" value="NM_014587.4"/>
</dbReference>
<dbReference type="SMR" id="P57073"/>
<dbReference type="BioGRID" id="119036">
    <property type="interactions" value="12"/>
</dbReference>
<dbReference type="FunCoup" id="P57073">
    <property type="interactions" value="663"/>
</dbReference>
<dbReference type="IntAct" id="P57073">
    <property type="interactions" value="5"/>
</dbReference>
<dbReference type="STRING" id="9606.ENSP00000293894"/>
<dbReference type="GlyGen" id="P57073">
    <property type="glycosylation" value="1 site"/>
</dbReference>
<dbReference type="iPTMnet" id="P57073"/>
<dbReference type="PhosphoSitePlus" id="P57073"/>
<dbReference type="BioMuta" id="SOX8"/>
<dbReference type="DMDM" id="10720294"/>
<dbReference type="jPOST" id="P57073"/>
<dbReference type="MassIVE" id="P57073"/>
<dbReference type="PaxDb" id="9606-ENSP00000293894"/>
<dbReference type="PeptideAtlas" id="P57073"/>
<dbReference type="ProteomicsDB" id="56981"/>
<dbReference type="Antibodypedia" id="9438">
    <property type="antibodies" value="345 antibodies from 36 providers"/>
</dbReference>
<dbReference type="DNASU" id="30812"/>
<dbReference type="Ensembl" id="ENST00000293894.4">
    <property type="protein sequence ID" value="ENSP00000293894.3"/>
    <property type="gene ID" value="ENSG00000005513.11"/>
</dbReference>
<dbReference type="GeneID" id="30812"/>
<dbReference type="KEGG" id="hsa:30812"/>
<dbReference type="MANE-Select" id="ENST00000293894.4">
    <property type="protein sequence ID" value="ENSP00000293894.3"/>
    <property type="RefSeq nucleotide sequence ID" value="NM_014587.5"/>
    <property type="RefSeq protein sequence ID" value="NP_055402.2"/>
</dbReference>
<dbReference type="UCSC" id="uc002ckn.3">
    <property type="organism name" value="human"/>
</dbReference>
<dbReference type="AGR" id="HGNC:11203"/>
<dbReference type="CTD" id="30812"/>
<dbReference type="DisGeNET" id="30812"/>
<dbReference type="GeneCards" id="SOX8"/>
<dbReference type="HGNC" id="HGNC:11203">
    <property type="gene designation" value="SOX8"/>
</dbReference>
<dbReference type="HPA" id="ENSG00000005513">
    <property type="expression patterns" value="Tissue enriched (brain)"/>
</dbReference>
<dbReference type="MalaCards" id="SOX8"/>
<dbReference type="MIM" id="605923">
    <property type="type" value="gene"/>
</dbReference>
<dbReference type="neXtProt" id="NX_P57073"/>
<dbReference type="OpenTargets" id="ENSG00000005513"/>
<dbReference type="PharmGKB" id="PA36040"/>
<dbReference type="VEuPathDB" id="HostDB:ENSG00000005513"/>
<dbReference type="eggNOG" id="KOG0527">
    <property type="taxonomic scope" value="Eukaryota"/>
</dbReference>
<dbReference type="GeneTree" id="ENSGT00940000159920"/>
<dbReference type="HOGENOM" id="CLU_031800_0_0_1"/>
<dbReference type="InParanoid" id="P57073"/>
<dbReference type="OMA" id="AQVWTHK"/>
<dbReference type="OrthoDB" id="6247875at2759"/>
<dbReference type="PAN-GO" id="P57073">
    <property type="GO annotations" value="8 GO annotations based on evolutionary models"/>
</dbReference>
<dbReference type="PhylomeDB" id="P57073"/>
<dbReference type="PathwayCommons" id="P57073"/>
<dbReference type="SignaLink" id="P57073"/>
<dbReference type="SIGNOR" id="P57073"/>
<dbReference type="BioGRID-ORCS" id="30812">
    <property type="hits" value="8 hits in 1164 CRISPR screens"/>
</dbReference>
<dbReference type="ChiTaRS" id="SOX8">
    <property type="organism name" value="human"/>
</dbReference>
<dbReference type="GeneWiki" id="SOX8"/>
<dbReference type="GenomeRNAi" id="30812"/>
<dbReference type="Pharos" id="P57073">
    <property type="development level" value="Tbio"/>
</dbReference>
<dbReference type="PRO" id="PR:P57073"/>
<dbReference type="Proteomes" id="UP000005640">
    <property type="component" value="Chromosome 16"/>
</dbReference>
<dbReference type="RNAct" id="P57073">
    <property type="molecule type" value="protein"/>
</dbReference>
<dbReference type="Bgee" id="ENSG00000005513">
    <property type="expression patterns" value="Expressed in inferior vagus X ganglion and 138 other cell types or tissues"/>
</dbReference>
<dbReference type="GO" id="GO:0000785">
    <property type="term" value="C:chromatin"/>
    <property type="evidence" value="ECO:0000247"/>
    <property type="project" value="NTNU_SB"/>
</dbReference>
<dbReference type="GO" id="GO:0005737">
    <property type="term" value="C:cytoplasm"/>
    <property type="evidence" value="ECO:0000250"/>
    <property type="project" value="UniProtKB"/>
</dbReference>
<dbReference type="GO" id="GO:0005634">
    <property type="term" value="C:nucleus"/>
    <property type="evidence" value="ECO:0000314"/>
    <property type="project" value="UniProtKB"/>
</dbReference>
<dbReference type="GO" id="GO:0005667">
    <property type="term" value="C:transcription regulator complex"/>
    <property type="evidence" value="ECO:0007669"/>
    <property type="project" value="Ensembl"/>
</dbReference>
<dbReference type="GO" id="GO:0003677">
    <property type="term" value="F:DNA binding"/>
    <property type="evidence" value="ECO:0000303"/>
    <property type="project" value="UniProtKB"/>
</dbReference>
<dbReference type="GO" id="GO:0000981">
    <property type="term" value="F:DNA-binding transcription factor activity, RNA polymerase II-specific"/>
    <property type="evidence" value="ECO:0000247"/>
    <property type="project" value="NTNU_SB"/>
</dbReference>
<dbReference type="GO" id="GO:0140297">
    <property type="term" value="F:DNA-binding transcription factor binding"/>
    <property type="evidence" value="ECO:0007669"/>
    <property type="project" value="Ensembl"/>
</dbReference>
<dbReference type="GO" id="GO:0000978">
    <property type="term" value="F:RNA polymerase II cis-regulatory region sequence-specific DNA binding"/>
    <property type="evidence" value="ECO:0000250"/>
    <property type="project" value="UniProtKB"/>
</dbReference>
<dbReference type="GO" id="GO:1990837">
    <property type="term" value="F:sequence-specific double-stranded DNA binding"/>
    <property type="evidence" value="ECO:0000314"/>
    <property type="project" value="ARUK-UCL"/>
</dbReference>
<dbReference type="GO" id="GO:0060612">
    <property type="term" value="P:adipose tissue development"/>
    <property type="evidence" value="ECO:0000250"/>
    <property type="project" value="UniProtKB"/>
</dbReference>
<dbReference type="GO" id="GO:0060018">
    <property type="term" value="P:astrocyte fate commitment"/>
    <property type="evidence" value="ECO:0007669"/>
    <property type="project" value="Ensembl"/>
</dbReference>
<dbReference type="GO" id="GO:0045165">
    <property type="term" value="P:cell fate commitment"/>
    <property type="evidence" value="ECO:0000250"/>
    <property type="project" value="UniProtKB"/>
</dbReference>
<dbReference type="GO" id="GO:0048469">
    <property type="term" value="P:cell maturation"/>
    <property type="evidence" value="ECO:0007669"/>
    <property type="project" value="Ensembl"/>
</dbReference>
<dbReference type="GO" id="GO:0048484">
    <property type="term" value="P:enteric nervous system development"/>
    <property type="evidence" value="ECO:0000250"/>
    <property type="project" value="UniProtKB"/>
</dbReference>
<dbReference type="GO" id="GO:0045444">
    <property type="term" value="P:fat cell differentiation"/>
    <property type="evidence" value="ECO:0000250"/>
    <property type="project" value="UniProtKB"/>
</dbReference>
<dbReference type="GO" id="GO:0001701">
    <property type="term" value="P:in utero embryonic development"/>
    <property type="evidence" value="ECO:0000250"/>
    <property type="project" value="UniProtKB"/>
</dbReference>
<dbReference type="GO" id="GO:0008584">
    <property type="term" value="P:male gonad development"/>
    <property type="evidence" value="ECO:0000250"/>
    <property type="project" value="UniProtKB"/>
</dbReference>
<dbReference type="GO" id="GO:0072289">
    <property type="term" value="P:metanephric nephron tubule formation"/>
    <property type="evidence" value="ECO:0000250"/>
    <property type="project" value="UniProtKB"/>
</dbReference>
<dbReference type="GO" id="GO:0061138">
    <property type="term" value="P:morphogenesis of a branching epithelium"/>
    <property type="evidence" value="ECO:0000250"/>
    <property type="project" value="UniProtKB"/>
</dbReference>
<dbReference type="GO" id="GO:0002009">
    <property type="term" value="P:morphogenesis of an epithelium"/>
    <property type="evidence" value="ECO:0000318"/>
    <property type="project" value="GO_Central"/>
</dbReference>
<dbReference type="GO" id="GO:0043066">
    <property type="term" value="P:negative regulation of apoptotic process"/>
    <property type="evidence" value="ECO:0000250"/>
    <property type="project" value="UniProtKB"/>
</dbReference>
<dbReference type="GO" id="GO:0045892">
    <property type="term" value="P:negative regulation of DNA-templated transcription"/>
    <property type="evidence" value="ECO:0000250"/>
    <property type="project" value="UniProtKB"/>
</dbReference>
<dbReference type="GO" id="GO:0045662">
    <property type="term" value="P:negative regulation of myoblast differentiation"/>
    <property type="evidence" value="ECO:0000250"/>
    <property type="project" value="UniProtKB"/>
</dbReference>
<dbReference type="GO" id="GO:0046533">
    <property type="term" value="P:negative regulation of photoreceptor cell differentiation"/>
    <property type="evidence" value="ECO:0007669"/>
    <property type="project" value="Ensembl"/>
</dbReference>
<dbReference type="GO" id="GO:0000122">
    <property type="term" value="P:negative regulation of transcription by RNA polymerase II"/>
    <property type="evidence" value="ECO:0000318"/>
    <property type="project" value="GO_Central"/>
</dbReference>
<dbReference type="GO" id="GO:0014032">
    <property type="term" value="P:neural crest cell development"/>
    <property type="evidence" value="ECO:0000318"/>
    <property type="project" value="GO_Central"/>
</dbReference>
<dbReference type="GO" id="GO:0001755">
    <property type="term" value="P:neural crest cell migration"/>
    <property type="evidence" value="ECO:0000250"/>
    <property type="project" value="UniProtKB"/>
</dbReference>
<dbReference type="GO" id="GO:0048709">
    <property type="term" value="P:oligodendrocyte differentiation"/>
    <property type="evidence" value="ECO:0000250"/>
    <property type="project" value="UniProtKB"/>
</dbReference>
<dbReference type="GO" id="GO:0001649">
    <property type="term" value="P:osteoblast differentiation"/>
    <property type="evidence" value="ECO:0000250"/>
    <property type="project" value="UniProtKB"/>
</dbReference>
<dbReference type="GO" id="GO:0007422">
    <property type="term" value="P:peripheral nervous system development"/>
    <property type="evidence" value="ECO:0000250"/>
    <property type="project" value="UniProtKB"/>
</dbReference>
<dbReference type="GO" id="GO:0090190">
    <property type="term" value="P:positive regulation of branching involved in ureteric bud morphogenesis"/>
    <property type="evidence" value="ECO:0000250"/>
    <property type="project" value="UniProtKB"/>
</dbReference>
<dbReference type="GO" id="GO:0045893">
    <property type="term" value="P:positive regulation of DNA-templated transcription"/>
    <property type="evidence" value="ECO:0000250"/>
    <property type="project" value="UniProtKB"/>
</dbReference>
<dbReference type="GO" id="GO:0010628">
    <property type="term" value="P:positive regulation of gene expression"/>
    <property type="evidence" value="ECO:0007669"/>
    <property type="project" value="Ensembl"/>
</dbReference>
<dbReference type="GO" id="GO:0014015">
    <property type="term" value="P:positive regulation of gliogenesis"/>
    <property type="evidence" value="ECO:0000250"/>
    <property type="project" value="UniProtKB"/>
</dbReference>
<dbReference type="GO" id="GO:0090184">
    <property type="term" value="P:positive regulation of kidney development"/>
    <property type="evidence" value="ECO:0000250"/>
    <property type="project" value="UniProtKB"/>
</dbReference>
<dbReference type="GO" id="GO:0033690">
    <property type="term" value="P:positive regulation of osteoblast proliferation"/>
    <property type="evidence" value="ECO:0000250"/>
    <property type="project" value="UniProtKB"/>
</dbReference>
<dbReference type="GO" id="GO:0045944">
    <property type="term" value="P:positive regulation of transcription by RNA polymerase II"/>
    <property type="evidence" value="ECO:0000314"/>
    <property type="project" value="UniProtKB"/>
</dbReference>
<dbReference type="GO" id="GO:0010817">
    <property type="term" value="P:regulation of hormone levels"/>
    <property type="evidence" value="ECO:0000250"/>
    <property type="project" value="UniProtKB"/>
</dbReference>
<dbReference type="GO" id="GO:0072034">
    <property type="term" value="P:renal vesicle induction"/>
    <property type="evidence" value="ECO:0000250"/>
    <property type="project" value="UniProtKB"/>
</dbReference>
<dbReference type="GO" id="GO:0060041">
    <property type="term" value="P:retina development in camera-type eye"/>
    <property type="evidence" value="ECO:0000250"/>
    <property type="project" value="UniProtKB"/>
</dbReference>
<dbReference type="GO" id="GO:0060221">
    <property type="term" value="P:retinal rod cell differentiation"/>
    <property type="evidence" value="ECO:0000250"/>
    <property type="project" value="UniProtKB"/>
</dbReference>
<dbReference type="GO" id="GO:0060009">
    <property type="term" value="P:Sertoli cell development"/>
    <property type="evidence" value="ECO:0000250"/>
    <property type="project" value="UniProtKB"/>
</dbReference>
<dbReference type="GO" id="GO:0007165">
    <property type="term" value="P:signal transduction"/>
    <property type="evidence" value="ECO:0000250"/>
    <property type="project" value="UniProtKB"/>
</dbReference>
<dbReference type="GO" id="GO:0035914">
    <property type="term" value="P:skeletal muscle cell differentiation"/>
    <property type="evidence" value="ECO:0007669"/>
    <property type="project" value="Ensembl"/>
</dbReference>
<dbReference type="GO" id="GO:0007283">
    <property type="term" value="P:spermatogenesis"/>
    <property type="evidence" value="ECO:0000250"/>
    <property type="project" value="UniProtKB"/>
</dbReference>
<dbReference type="GO" id="GO:0072197">
    <property type="term" value="P:ureter morphogenesis"/>
    <property type="evidence" value="ECO:0000250"/>
    <property type="project" value="UniProtKB"/>
</dbReference>
<dbReference type="CDD" id="cd22031">
    <property type="entry name" value="HMG-box_SoxE"/>
    <property type="match status" value="1"/>
</dbReference>
<dbReference type="FunFam" id="1.10.30.10:FF:000004">
    <property type="entry name" value="Transcription factor SOX-10"/>
    <property type="match status" value="1"/>
</dbReference>
<dbReference type="Gene3D" id="1.10.30.10">
    <property type="entry name" value="High mobility group box domain"/>
    <property type="match status" value="1"/>
</dbReference>
<dbReference type="InterPro" id="IPR009071">
    <property type="entry name" value="HMG_box_dom"/>
</dbReference>
<dbReference type="InterPro" id="IPR036910">
    <property type="entry name" value="HMG_box_dom_sf"/>
</dbReference>
<dbReference type="InterPro" id="IPR022151">
    <property type="entry name" value="Sox_N"/>
</dbReference>
<dbReference type="InterPro" id="IPR050917">
    <property type="entry name" value="SOX_TF"/>
</dbReference>
<dbReference type="PANTHER" id="PTHR45803">
    <property type="entry name" value="SOX100B"/>
    <property type="match status" value="1"/>
</dbReference>
<dbReference type="PANTHER" id="PTHR45803:SF2">
    <property type="entry name" value="TRANSCRIPTION FACTOR SOX-8"/>
    <property type="match status" value="1"/>
</dbReference>
<dbReference type="Pfam" id="PF00505">
    <property type="entry name" value="HMG_box"/>
    <property type="match status" value="1"/>
</dbReference>
<dbReference type="Pfam" id="PF12444">
    <property type="entry name" value="Sox_N"/>
    <property type="match status" value="1"/>
</dbReference>
<dbReference type="SMART" id="SM00398">
    <property type="entry name" value="HMG"/>
    <property type="match status" value="1"/>
</dbReference>
<dbReference type="SUPFAM" id="SSF47095">
    <property type="entry name" value="HMG-box"/>
    <property type="match status" value="1"/>
</dbReference>
<dbReference type="PROSITE" id="PS50118">
    <property type="entry name" value="HMG_BOX_2"/>
    <property type="match status" value="1"/>
</dbReference>
<sequence>MLDMSEARSQPPCSPSGTASSMSHVEDSDSDAPPSPAGSEGLGRAGVAVGGARGDPAEAADERFPACIRDAVSQVLKGYDWSLVPMPVRGGGGGALKAKPHVKRPMNAFMVWAQAARRKLADQYPHLHNAELSKTLGKLWRLLSESEKRPFVEEAERLRVQHKKDHPDYKYQPRRRKSAKAGHSDSDSGAELGPHPGGGAVYKAEAGLGDGHHHGDHTGQTHGPPTPPTTPKTELQQAGAKPELKLEGRRPVDSGRQNIDFSNVDISELSSEVMGTMDAFDVHEFDQYLPLGGPAPPEPGQAYGGAYFHAGASPVWAHKSAPSASASPTETGPPRPHIKTEQPSPGHYGDQPRGSPDYGSCSGQSSATPAAPAGPFAGSQGDYGDLQASSYYGAYPGYAPGLYQYPCFHSPRRPYASPLLNGLALPPAHSPTSHWDQPVYTTLTRP</sequence>
<comment type="function">
    <text evidence="2">Transcription factor that may play a role in central nervous system, limb and facial development. May be involved in male sex determination. Binds the consensus motif 5'-[AT][AT]CAA[AT]G-3' (By similarity).</text>
</comment>
<comment type="subcellular location">
    <subcellularLocation>
        <location evidence="3">Nucleus</location>
    </subcellularLocation>
</comment>
<comment type="domain">
    <text evidence="1">The transactivation domains TAM and TAC (for transactivation domain in the middle and at the C-terminus, respectively) are required to contact transcriptional coactivators and basal transcriptional machinery components and thereby induce gene transactivation.</text>
</comment>
<comment type="domain">
    <text evidence="5">The 9aaTAD motif is a transactivation domain present in a large number of yeast and animal transcription factors.</text>
</comment>
<comment type="sequence caution" evidence="8">
    <conflict type="erroneous initiation">
        <sequence resource="EMBL-CDS" id="CAB75612"/>
    </conflict>
</comment>
<protein>
    <recommendedName>
        <fullName>Transcription factor SOX-8</fullName>
    </recommendedName>
</protein>
<gene>
    <name evidence="7 9" type="primary">SOX8</name>
</gene>
<keyword id="KW-0238">DNA-binding</keyword>
<keyword id="KW-0539">Nucleus</keyword>
<keyword id="KW-1267">Proteomics identification</keyword>
<keyword id="KW-1185">Reference proteome</keyword>
<keyword id="KW-0804">Transcription</keyword>
<keyword id="KW-0805">Transcription regulation</keyword>
<accession>P57073</accession>
<accession>Q9NZW2</accession>
<organism>
    <name type="scientific">Homo sapiens</name>
    <name type="common">Human</name>
    <dbReference type="NCBI Taxonomy" id="9606"/>
    <lineage>
        <taxon>Eukaryota</taxon>
        <taxon>Metazoa</taxon>
        <taxon>Chordata</taxon>
        <taxon>Craniata</taxon>
        <taxon>Vertebrata</taxon>
        <taxon>Euteleostomi</taxon>
        <taxon>Mammalia</taxon>
        <taxon>Eutheria</taxon>
        <taxon>Euarchontoglires</taxon>
        <taxon>Primates</taxon>
        <taxon>Haplorrhini</taxon>
        <taxon>Catarrhini</taxon>
        <taxon>Hominidae</taxon>
        <taxon>Homo</taxon>
    </lineage>
</organism>
<feature type="chain" id="PRO_0000048733" description="Transcription factor SOX-8">
    <location>
        <begin position="1"/>
        <end position="446"/>
    </location>
</feature>
<feature type="DNA-binding region" description="HMG box" evidence="3">
    <location>
        <begin position="102"/>
        <end position="170"/>
    </location>
</feature>
<feature type="region of interest" description="Disordered" evidence="4">
    <location>
        <begin position="1"/>
        <end position="58"/>
    </location>
</feature>
<feature type="region of interest" description="Dimerization (DIM)" evidence="6">
    <location>
        <begin position="58"/>
        <end position="100"/>
    </location>
</feature>
<feature type="region of interest" description="Disordered" evidence="4">
    <location>
        <begin position="155"/>
        <end position="259"/>
    </location>
</feature>
<feature type="region of interest" description="Transactivation domain (TAM)" evidence="6">
    <location>
        <begin position="224"/>
        <end position="298"/>
    </location>
</feature>
<feature type="region of interest" description="Disordered" evidence="4">
    <location>
        <begin position="318"/>
        <end position="378"/>
    </location>
</feature>
<feature type="region of interest" description="Transactivation domain (TAC)" evidence="6">
    <location>
        <begin position="335"/>
        <end position="446"/>
    </location>
</feature>
<feature type="region of interest" description="Disordered" evidence="4">
    <location>
        <begin position="425"/>
        <end position="446"/>
    </location>
</feature>
<feature type="short sequence motif" description="9aaTAD" evidence="5">
    <location>
        <begin position="400"/>
        <end position="408"/>
    </location>
</feature>
<feature type="compositionally biased region" description="Gly residues" evidence="4">
    <location>
        <begin position="40"/>
        <end position="53"/>
    </location>
</feature>
<feature type="compositionally biased region" description="Basic and acidic residues" evidence="4">
    <location>
        <begin position="155"/>
        <end position="171"/>
    </location>
</feature>
<feature type="compositionally biased region" description="Basic and acidic residues" evidence="4">
    <location>
        <begin position="210"/>
        <end position="219"/>
    </location>
</feature>
<feature type="compositionally biased region" description="Basic and acidic residues" evidence="4">
    <location>
        <begin position="242"/>
        <end position="253"/>
    </location>
</feature>
<feature type="compositionally biased region" description="Low complexity" evidence="4">
    <location>
        <begin position="362"/>
        <end position="378"/>
    </location>
</feature>
<feature type="compositionally biased region" description="Polar residues" evidence="4">
    <location>
        <begin position="430"/>
        <end position="446"/>
    </location>
</feature>
<reference key="1">
    <citation type="submission" date="2000-01" db="EMBL/GenBank/DDBJ databases">
        <title>SOX8: a newly identified human gene expressed in paediatric brain tumours and a candidate for the mental retardation phenotype in ATR-16.</title>
        <authorList>
            <person name="Cheng Y.-C."/>
            <person name="Badge R.M."/>
            <person name="Armour J.A.L."/>
            <person name="Scotting P.J."/>
        </authorList>
    </citation>
    <scope>NUCLEOTIDE SEQUENCE [MRNA]</scope>
</reference>
<reference key="2">
    <citation type="journal article" date="2001" name="Hum. Mol. Genet.">
        <title>Sequence, structure and pathology of the fully annotated terminal 2 Mb of the short arm of human chromosome 16.</title>
        <authorList>
            <person name="Daniels R.J."/>
            <person name="Peden J.F."/>
            <person name="Lloyd C."/>
            <person name="Horsley S.W."/>
            <person name="Clark K."/>
            <person name="Tufarelli C."/>
            <person name="Kearney L."/>
            <person name="Buckle V.J."/>
            <person name="Doggett N.A."/>
            <person name="Flint J."/>
            <person name="Higgs D.R."/>
        </authorList>
    </citation>
    <scope>NUCLEOTIDE SEQUENCE [LARGE SCALE GENOMIC DNA]</scope>
</reference>
<reference key="3">
    <citation type="journal article" date="2004" name="Nature">
        <title>The sequence and analysis of duplication-rich human chromosome 16.</title>
        <authorList>
            <person name="Martin J."/>
            <person name="Han C."/>
            <person name="Gordon L.A."/>
            <person name="Terry A."/>
            <person name="Prabhakar S."/>
            <person name="She X."/>
            <person name="Xie G."/>
            <person name="Hellsten U."/>
            <person name="Chan Y.M."/>
            <person name="Altherr M."/>
            <person name="Couronne O."/>
            <person name="Aerts A."/>
            <person name="Bajorek E."/>
            <person name="Black S."/>
            <person name="Blumer H."/>
            <person name="Branscomb E."/>
            <person name="Brown N.C."/>
            <person name="Bruno W.J."/>
            <person name="Buckingham J.M."/>
            <person name="Callen D.F."/>
            <person name="Campbell C.S."/>
            <person name="Campbell M.L."/>
            <person name="Campbell E.W."/>
            <person name="Caoile C."/>
            <person name="Challacombe J.F."/>
            <person name="Chasteen L.A."/>
            <person name="Chertkov O."/>
            <person name="Chi H.C."/>
            <person name="Christensen M."/>
            <person name="Clark L.M."/>
            <person name="Cohn J.D."/>
            <person name="Denys M."/>
            <person name="Detter J.C."/>
            <person name="Dickson M."/>
            <person name="Dimitrijevic-Bussod M."/>
            <person name="Escobar J."/>
            <person name="Fawcett J.J."/>
            <person name="Flowers D."/>
            <person name="Fotopulos D."/>
            <person name="Glavina T."/>
            <person name="Gomez M."/>
            <person name="Gonzales E."/>
            <person name="Goodstein D."/>
            <person name="Goodwin L.A."/>
            <person name="Grady D.L."/>
            <person name="Grigoriev I."/>
            <person name="Groza M."/>
            <person name="Hammon N."/>
            <person name="Hawkins T."/>
            <person name="Haydu L."/>
            <person name="Hildebrand C.E."/>
            <person name="Huang W."/>
            <person name="Israni S."/>
            <person name="Jett J."/>
            <person name="Jewett P.B."/>
            <person name="Kadner K."/>
            <person name="Kimball H."/>
            <person name="Kobayashi A."/>
            <person name="Krawczyk M.-C."/>
            <person name="Leyba T."/>
            <person name="Longmire J.L."/>
            <person name="Lopez F."/>
            <person name="Lou Y."/>
            <person name="Lowry S."/>
            <person name="Ludeman T."/>
            <person name="Manohar C.F."/>
            <person name="Mark G.A."/>
            <person name="McMurray K.L."/>
            <person name="Meincke L.J."/>
            <person name="Morgan J."/>
            <person name="Moyzis R.K."/>
            <person name="Mundt M.O."/>
            <person name="Munk A.C."/>
            <person name="Nandkeshwar R.D."/>
            <person name="Pitluck S."/>
            <person name="Pollard M."/>
            <person name="Predki P."/>
            <person name="Parson-Quintana B."/>
            <person name="Ramirez L."/>
            <person name="Rash S."/>
            <person name="Retterer J."/>
            <person name="Ricke D.O."/>
            <person name="Robinson D.L."/>
            <person name="Rodriguez A."/>
            <person name="Salamov A."/>
            <person name="Saunders E.H."/>
            <person name="Scott D."/>
            <person name="Shough T."/>
            <person name="Stallings R.L."/>
            <person name="Stalvey M."/>
            <person name="Sutherland R.D."/>
            <person name="Tapia R."/>
            <person name="Tesmer J.G."/>
            <person name="Thayer N."/>
            <person name="Thompson L.S."/>
            <person name="Tice H."/>
            <person name="Torney D.C."/>
            <person name="Tran-Gyamfi M."/>
            <person name="Tsai M."/>
            <person name="Ulanovsky L.E."/>
            <person name="Ustaszewska A."/>
            <person name="Vo N."/>
            <person name="White P.S."/>
            <person name="Williams A.L."/>
            <person name="Wills P.L."/>
            <person name="Wu J.-R."/>
            <person name="Wu K."/>
            <person name="Yang J."/>
            <person name="DeJong P."/>
            <person name="Bruce D."/>
            <person name="Doggett N.A."/>
            <person name="Deaven L."/>
            <person name="Schmutz J."/>
            <person name="Grimwood J."/>
            <person name="Richardson P."/>
            <person name="Rokhsar D.S."/>
            <person name="Eichler E.E."/>
            <person name="Gilna P."/>
            <person name="Lucas S.M."/>
            <person name="Myers R.M."/>
            <person name="Rubin E.M."/>
            <person name="Pennacchio L.A."/>
        </authorList>
    </citation>
    <scope>NUCLEOTIDE SEQUENCE [LARGE SCALE GENOMIC DNA]</scope>
</reference>
<reference key="4">
    <citation type="journal article" date="2004" name="Genome Res.">
        <title>The status, quality, and expansion of the NIH full-length cDNA project: the Mammalian Gene Collection (MGC).</title>
        <authorList>
            <consortium name="The MGC Project Team"/>
        </authorList>
    </citation>
    <scope>NUCLEOTIDE SEQUENCE [LARGE SCALE MRNA]</scope>
    <source>
        <tissue>Brain</tissue>
    </source>
</reference>
<reference key="5">
    <citation type="journal article" date="2000" name="Genomics">
        <title>The SOX8 gene is located within 700 kb of the tip of chromosome 16p and is deleted in a patient with ATR-16 syndrome.</title>
        <authorList>
            <person name="Pfeifer D."/>
            <person name="Poulat F."/>
            <person name="Holinski-Feder E."/>
            <person name="Kooy F."/>
            <person name="Scherer G."/>
        </authorList>
    </citation>
    <scope>NUCLEOTIDE SEQUENCE [MRNA] OF 119-446</scope>
</reference>
<reference key="6">
    <citation type="journal article" date="2019" name="Nucleic Acids Res.">
        <title>The SOXE transcription factors-SOX8, SOX9 and SOX10-share a bi-partite transactivation mechanism.</title>
        <authorList>
            <person name="Haseeb A."/>
            <person name="Lefebvre V."/>
        </authorList>
    </citation>
    <scope>TRANSACTIVATION REGIONS</scope>
</reference>
<reference key="7">
    <citation type="journal article" date="2021" name="Stem. Cell. Rev. Rep.">
        <title>The 9aaTAD Activation Domains in the Yamanaka Transcription Factors Oct4, Sox2, Myc, and Klf4.</title>
        <authorList>
            <person name="Piskacek M."/>
            <person name="Otasevic T."/>
            <person name="Repko M."/>
            <person name="Knight A."/>
        </authorList>
    </citation>
    <scope>9AATAD MOTIF</scope>
</reference>